<feature type="chain" id="PRO_0000143089" description="Bcl-2-related ovarian killer protein">
    <location>
        <begin position="1"/>
        <end position="213"/>
    </location>
</feature>
<feature type="transmembrane region" description="Helical" evidence="3">
    <location>
        <begin position="190"/>
        <end position="210"/>
    </location>
</feature>
<feature type="short sequence motif" description="BH4">
    <location>
        <begin position="32"/>
        <end position="44"/>
    </location>
</feature>
<feature type="short sequence motif" description="BH3">
    <location>
        <begin position="67"/>
        <end position="83"/>
    </location>
</feature>
<feature type="short sequence motif" description="BH1">
    <location>
        <begin position="113"/>
        <end position="132"/>
    </location>
</feature>
<feature type="short sequence motif" description="BH2">
    <location>
        <begin position="165"/>
        <end position="179"/>
    </location>
</feature>
<feature type="helix" evidence="7">
    <location>
        <begin position="24"/>
        <end position="46"/>
    </location>
</feature>
<feature type="strand" evidence="7">
    <location>
        <begin position="55"/>
        <end position="57"/>
    </location>
</feature>
<feature type="helix" evidence="7">
    <location>
        <begin position="63"/>
        <end position="81"/>
    </location>
</feature>
<feature type="helix" evidence="7">
    <location>
        <begin position="83"/>
        <end position="86"/>
    </location>
</feature>
<feature type="helix" evidence="7">
    <location>
        <begin position="89"/>
        <end position="92"/>
    </location>
</feature>
<feature type="helix" evidence="7">
    <location>
        <begin position="100"/>
        <end position="115"/>
    </location>
</feature>
<feature type="helix" evidence="7">
    <location>
        <begin position="121"/>
        <end position="140"/>
    </location>
</feature>
<feature type="helix" evidence="7">
    <location>
        <begin position="146"/>
        <end position="161"/>
    </location>
</feature>
<feature type="helix" evidence="7">
    <location>
        <begin position="163"/>
        <end position="168"/>
    </location>
</feature>
<feature type="helix" evidence="7">
    <location>
        <begin position="172"/>
        <end position="178"/>
    </location>
</feature>
<proteinExistence type="evidence at protein level"/>
<reference key="1">
    <citation type="journal article" date="2000" name="FEBS Lett.">
        <title>Evolutionarily conserved Bok proteins in the Bcl-2 family.</title>
        <authorList>
            <person name="Zhang H."/>
            <person name="Holzgreve W."/>
            <person name="De Geyter C."/>
        </authorList>
    </citation>
    <scope>NUCLEOTIDE SEQUENCE [MRNA]</scope>
</reference>
<reference key="2">
    <citation type="submission" date="2000-07" db="EMBL/GenBank/DDBJ databases">
        <title>Characterization and expression of Bok in the hen ovary.</title>
        <authorList>
            <person name="Mills E.M."/>
            <person name="Johnson A.L."/>
            <person name="Bridgham J.T."/>
        </authorList>
    </citation>
    <scope>NUCLEOTIDE SEQUENCE [MRNA]</scope>
</reference>
<keyword id="KW-0002">3D-structure</keyword>
<keyword id="KW-0053">Apoptosis</keyword>
<keyword id="KW-0472">Membrane</keyword>
<keyword id="KW-1185">Reference proteome</keyword>
<keyword id="KW-0812">Transmembrane</keyword>
<keyword id="KW-1133">Transmembrane helix</keyword>
<comment type="function">
    <text evidence="1">May play a role in apoptosis.</text>
</comment>
<comment type="subcellular location">
    <subcellularLocation>
        <location evidence="2">Membrane</location>
        <topology evidence="1">Single-pass membrane protein</topology>
    </subcellularLocation>
</comment>
<comment type="similarity">
    <text evidence="6">Belongs to the Bcl-2 family.</text>
</comment>
<sequence>MEVLRRSSVFAAEVMEVFDRSPTDKELVSQAKALCRDYINSRLIRAGVSWSKPEHNTPVPGGKLAEVSAILLRLGDELEYIRPNVYRNIARQLNISLHSETVVTDAFLAVAAQIFTAGITWGKVVSLYAVAAGLAVDCVRHAQPAMVHTIVDCLGEFVRKTLVTWLKRRGGWADITKCVVSTDPSLRSHWLVAAVCSFGHFLKAIFFVLLPER</sequence>
<evidence type="ECO:0000250" key="1">
    <source>
        <dbReference type="UniProtKB" id="O35425"/>
    </source>
</evidence>
<evidence type="ECO:0000250" key="2">
    <source>
        <dbReference type="UniProtKB" id="Q9UMX3"/>
    </source>
</evidence>
<evidence type="ECO:0000255" key="3"/>
<evidence type="ECO:0000303" key="4">
    <source>
    </source>
</evidence>
<evidence type="ECO:0000303" key="5">
    <source ref="2"/>
</evidence>
<evidence type="ECO:0000305" key="6"/>
<evidence type="ECO:0007829" key="7">
    <source>
        <dbReference type="PDB" id="5WDD"/>
    </source>
</evidence>
<accession>Q9I8I2</accession>
<accession>Q9DGJ5</accession>
<protein>
    <recommendedName>
        <fullName evidence="4 5">Bcl-2-related ovarian killer protein</fullName>
    </recommendedName>
</protein>
<name>BOK_CHICK</name>
<organism>
    <name type="scientific">Gallus gallus</name>
    <name type="common">Chicken</name>
    <dbReference type="NCBI Taxonomy" id="9031"/>
    <lineage>
        <taxon>Eukaryota</taxon>
        <taxon>Metazoa</taxon>
        <taxon>Chordata</taxon>
        <taxon>Craniata</taxon>
        <taxon>Vertebrata</taxon>
        <taxon>Euteleostomi</taxon>
        <taxon>Archelosauria</taxon>
        <taxon>Archosauria</taxon>
        <taxon>Dinosauria</taxon>
        <taxon>Saurischia</taxon>
        <taxon>Theropoda</taxon>
        <taxon>Coelurosauria</taxon>
        <taxon>Aves</taxon>
        <taxon>Neognathae</taxon>
        <taxon>Galloanserae</taxon>
        <taxon>Galliformes</taxon>
        <taxon>Phasianidae</taxon>
        <taxon>Phasianinae</taxon>
        <taxon>Gallus</taxon>
    </lineage>
</organism>
<gene>
    <name evidence="4 5" type="primary">BOK</name>
</gene>
<dbReference type="EMBL" id="AF275944">
    <property type="protein sequence ID" value="AAF81282.1"/>
    <property type="molecule type" value="mRNA"/>
</dbReference>
<dbReference type="EMBL" id="AF290888">
    <property type="protein sequence ID" value="AAG01182.1"/>
    <property type="molecule type" value="mRNA"/>
</dbReference>
<dbReference type="RefSeq" id="NP_990037.1">
    <property type="nucleotide sequence ID" value="NM_204706.2"/>
</dbReference>
<dbReference type="RefSeq" id="XP_046754266.1">
    <property type="nucleotide sequence ID" value="XM_046898310.1"/>
</dbReference>
<dbReference type="RefSeq" id="XP_046754267.1">
    <property type="nucleotide sequence ID" value="XM_046898311.1"/>
</dbReference>
<dbReference type="RefSeq" id="XP_046754268.1">
    <property type="nucleotide sequence ID" value="XM_046898312.1"/>
</dbReference>
<dbReference type="RefSeq" id="XP_046779533.1">
    <property type="nucleotide sequence ID" value="XM_046923577.1"/>
</dbReference>
<dbReference type="RefSeq" id="XP_046779534.1">
    <property type="nucleotide sequence ID" value="XM_046923578.1"/>
</dbReference>
<dbReference type="PDB" id="5WDD">
    <property type="method" value="X-ray"/>
    <property type="resolution" value="1.80 A"/>
    <property type="chains" value="A/B=19-181"/>
</dbReference>
<dbReference type="PDBsum" id="5WDD"/>
<dbReference type="SMR" id="Q9I8I2"/>
<dbReference type="FunCoup" id="Q9I8I2">
    <property type="interactions" value="187"/>
</dbReference>
<dbReference type="STRING" id="9031.ENSGALP00000071746"/>
<dbReference type="PaxDb" id="9031-ENSGALP00000009257"/>
<dbReference type="Ensembl" id="ENSGALT00010057196.1">
    <property type="protein sequence ID" value="ENSGALP00010034787.1"/>
    <property type="gene ID" value="ENSGALG00010023473.1"/>
</dbReference>
<dbReference type="GeneID" id="395445"/>
<dbReference type="KEGG" id="gga:395445"/>
<dbReference type="CTD" id="666"/>
<dbReference type="VEuPathDB" id="HostDB:geneid_395445"/>
<dbReference type="eggNOG" id="KOG4728">
    <property type="taxonomic scope" value="Eukaryota"/>
</dbReference>
<dbReference type="GeneTree" id="ENSGT01130000278292"/>
<dbReference type="InParanoid" id="Q9I8I2"/>
<dbReference type="OMA" id="DMTKCVV"/>
<dbReference type="OrthoDB" id="5947850at2759"/>
<dbReference type="PhylomeDB" id="Q9I8I2"/>
<dbReference type="PRO" id="PR:Q9I8I2"/>
<dbReference type="Proteomes" id="UP000000539">
    <property type="component" value="Chromosome 9"/>
</dbReference>
<dbReference type="GO" id="GO:0005741">
    <property type="term" value="C:mitochondrial outer membrane"/>
    <property type="evidence" value="ECO:0000318"/>
    <property type="project" value="GO_Central"/>
</dbReference>
<dbReference type="GO" id="GO:0015267">
    <property type="term" value="F:channel activity"/>
    <property type="evidence" value="ECO:0000318"/>
    <property type="project" value="GO_Central"/>
</dbReference>
<dbReference type="GO" id="GO:0097192">
    <property type="term" value="P:extrinsic apoptotic signaling pathway in absence of ligand"/>
    <property type="evidence" value="ECO:0000318"/>
    <property type="project" value="GO_Central"/>
</dbReference>
<dbReference type="GO" id="GO:0008630">
    <property type="term" value="P:intrinsic apoptotic signaling pathway in response to DNA damage"/>
    <property type="evidence" value="ECO:0000318"/>
    <property type="project" value="GO_Central"/>
</dbReference>
<dbReference type="GO" id="GO:0043065">
    <property type="term" value="P:positive regulation of apoptotic process"/>
    <property type="evidence" value="ECO:0000318"/>
    <property type="project" value="GO_Central"/>
</dbReference>
<dbReference type="GO" id="GO:0001836">
    <property type="term" value="P:release of cytochrome c from mitochondria"/>
    <property type="evidence" value="ECO:0000318"/>
    <property type="project" value="GO_Central"/>
</dbReference>
<dbReference type="CDD" id="cd06845">
    <property type="entry name" value="Bcl-2_like"/>
    <property type="match status" value="1"/>
</dbReference>
<dbReference type="FunFam" id="1.10.437.10:FF:000005">
    <property type="entry name" value="bcl-2-related ovarian killer protein"/>
    <property type="match status" value="1"/>
</dbReference>
<dbReference type="Gene3D" id="1.10.437.10">
    <property type="entry name" value="Blc2-like"/>
    <property type="match status" value="1"/>
</dbReference>
<dbReference type="InterPro" id="IPR036834">
    <property type="entry name" value="Bcl-2-like_sf"/>
</dbReference>
<dbReference type="InterPro" id="IPR046371">
    <property type="entry name" value="Bcl-2_BH1-3"/>
</dbReference>
<dbReference type="InterPro" id="IPR026298">
    <property type="entry name" value="Bcl-2_fam"/>
</dbReference>
<dbReference type="InterPro" id="IPR002475">
    <property type="entry name" value="Bcl2-like"/>
</dbReference>
<dbReference type="PANTHER" id="PTHR11256">
    <property type="entry name" value="BCL-2 RELATED"/>
    <property type="match status" value="1"/>
</dbReference>
<dbReference type="PANTHER" id="PTHR11256:SF48">
    <property type="entry name" value="BCL-2-RELATED OVARIAN KILLER PROTEIN"/>
    <property type="match status" value="1"/>
</dbReference>
<dbReference type="Pfam" id="PF00452">
    <property type="entry name" value="Bcl-2"/>
    <property type="match status" value="1"/>
</dbReference>
<dbReference type="PRINTS" id="PR01862">
    <property type="entry name" value="BCL2FAMILY"/>
</dbReference>
<dbReference type="SMART" id="SM00337">
    <property type="entry name" value="BCL"/>
    <property type="match status" value="1"/>
</dbReference>
<dbReference type="SUPFAM" id="SSF56854">
    <property type="entry name" value="Bcl-2 inhibitors of programmed cell death"/>
    <property type="match status" value="1"/>
</dbReference>
<dbReference type="PROSITE" id="PS50062">
    <property type="entry name" value="BCL2_FAMILY"/>
    <property type="match status" value="1"/>
</dbReference>